<name>KUP_LACGA</name>
<dbReference type="EMBL" id="CP000413">
    <property type="protein sequence ID" value="ABJ59565.1"/>
    <property type="molecule type" value="Genomic_DNA"/>
</dbReference>
<dbReference type="RefSeq" id="WP_011678740.1">
    <property type="nucleotide sequence ID" value="NZ_WBMG01000001.1"/>
</dbReference>
<dbReference type="GeneID" id="29639544"/>
<dbReference type="KEGG" id="lga:LGAS_0153"/>
<dbReference type="HOGENOM" id="CLU_008142_4_1_9"/>
<dbReference type="BioCyc" id="LGAS324831:G1G6Y-151-MONOMER"/>
<dbReference type="Proteomes" id="UP000000664">
    <property type="component" value="Chromosome"/>
</dbReference>
<dbReference type="GO" id="GO:0005886">
    <property type="term" value="C:plasma membrane"/>
    <property type="evidence" value="ECO:0007669"/>
    <property type="project" value="UniProtKB-SubCell"/>
</dbReference>
<dbReference type="GO" id="GO:0015079">
    <property type="term" value="F:potassium ion transmembrane transporter activity"/>
    <property type="evidence" value="ECO:0007669"/>
    <property type="project" value="UniProtKB-UniRule"/>
</dbReference>
<dbReference type="GO" id="GO:0015293">
    <property type="term" value="F:symporter activity"/>
    <property type="evidence" value="ECO:0007669"/>
    <property type="project" value="UniProtKB-UniRule"/>
</dbReference>
<dbReference type="HAMAP" id="MF_01522">
    <property type="entry name" value="Kup"/>
    <property type="match status" value="1"/>
</dbReference>
<dbReference type="InterPro" id="IPR003855">
    <property type="entry name" value="K+_transporter"/>
</dbReference>
<dbReference type="InterPro" id="IPR053952">
    <property type="entry name" value="K_trans_C"/>
</dbReference>
<dbReference type="InterPro" id="IPR053951">
    <property type="entry name" value="K_trans_N"/>
</dbReference>
<dbReference type="InterPro" id="IPR023051">
    <property type="entry name" value="Kup"/>
</dbReference>
<dbReference type="PANTHER" id="PTHR30540:SF83">
    <property type="entry name" value="K+ POTASSIUM TRANSPORTER"/>
    <property type="match status" value="1"/>
</dbReference>
<dbReference type="PANTHER" id="PTHR30540">
    <property type="entry name" value="OSMOTIC STRESS POTASSIUM TRANSPORTER"/>
    <property type="match status" value="1"/>
</dbReference>
<dbReference type="Pfam" id="PF02705">
    <property type="entry name" value="K_trans"/>
    <property type="match status" value="1"/>
</dbReference>
<dbReference type="Pfam" id="PF22776">
    <property type="entry name" value="K_trans_C"/>
    <property type="match status" value="1"/>
</dbReference>
<feature type="chain" id="PRO_0000279793" description="Probable potassium transport system protein Kup">
    <location>
        <begin position="1"/>
        <end position="682"/>
    </location>
</feature>
<feature type="transmembrane region" description="Helical" evidence="1">
    <location>
        <begin position="13"/>
        <end position="33"/>
    </location>
</feature>
<feature type="transmembrane region" description="Helical" evidence="1">
    <location>
        <begin position="55"/>
        <end position="75"/>
    </location>
</feature>
<feature type="transmembrane region" description="Helical" evidence="1">
    <location>
        <begin position="98"/>
        <end position="118"/>
    </location>
</feature>
<feature type="transmembrane region" description="Helical" evidence="1">
    <location>
        <begin position="138"/>
        <end position="158"/>
    </location>
</feature>
<feature type="transmembrane region" description="Helical" evidence="1">
    <location>
        <begin position="171"/>
        <end position="191"/>
    </location>
</feature>
<feature type="transmembrane region" description="Helical" evidence="1">
    <location>
        <begin position="217"/>
        <end position="237"/>
    </location>
</feature>
<feature type="transmembrane region" description="Helical" evidence="1">
    <location>
        <begin position="250"/>
        <end position="270"/>
    </location>
</feature>
<feature type="transmembrane region" description="Helical" evidence="1">
    <location>
        <begin position="295"/>
        <end position="315"/>
    </location>
</feature>
<feature type="transmembrane region" description="Helical" evidence="1">
    <location>
        <begin position="344"/>
        <end position="364"/>
    </location>
</feature>
<feature type="transmembrane region" description="Helical" evidence="1">
    <location>
        <begin position="375"/>
        <end position="395"/>
    </location>
</feature>
<feature type="transmembrane region" description="Helical" evidence="1">
    <location>
        <begin position="405"/>
        <end position="425"/>
    </location>
</feature>
<feature type="transmembrane region" description="Helical" evidence="1">
    <location>
        <begin position="428"/>
        <end position="448"/>
    </location>
</feature>
<gene>
    <name evidence="1" type="primary">kup</name>
    <name type="ordered locus">LGAS_0153</name>
</gene>
<accession>Q046Q7</accession>
<comment type="function">
    <text evidence="1">Transport of potassium into the cell. Likely operates as a K(+):H(+) symporter.</text>
</comment>
<comment type="catalytic activity">
    <reaction evidence="1">
        <text>K(+)(in) + H(+)(in) = K(+)(out) + H(+)(out)</text>
        <dbReference type="Rhea" id="RHEA:28490"/>
        <dbReference type="ChEBI" id="CHEBI:15378"/>
        <dbReference type="ChEBI" id="CHEBI:29103"/>
    </reaction>
    <physiologicalReaction direction="right-to-left" evidence="1">
        <dbReference type="Rhea" id="RHEA:28492"/>
    </physiologicalReaction>
</comment>
<comment type="subcellular location">
    <subcellularLocation>
        <location evidence="1">Cell membrane</location>
        <topology evidence="1">Multi-pass membrane protein</topology>
    </subcellularLocation>
</comment>
<comment type="similarity">
    <text evidence="1">Belongs to the HAK/KUP transporter (TC 2.A.72) family.</text>
</comment>
<organism>
    <name type="scientific">Lactobacillus gasseri (strain ATCC 33323 / DSM 20243 / BCRC 14619 / CIP 102991 / JCM 1131 / KCTC 3163 / NCIMB 11718 / NCTC 13722 / AM63)</name>
    <dbReference type="NCBI Taxonomy" id="324831"/>
    <lineage>
        <taxon>Bacteria</taxon>
        <taxon>Bacillati</taxon>
        <taxon>Bacillota</taxon>
        <taxon>Bacilli</taxon>
        <taxon>Lactobacillales</taxon>
        <taxon>Lactobacillaceae</taxon>
        <taxon>Lactobacillus</taxon>
    </lineage>
</organism>
<protein>
    <recommendedName>
        <fullName evidence="1">Probable potassium transport system protein Kup</fullName>
    </recommendedName>
</protein>
<reference key="1">
    <citation type="journal article" date="2006" name="Proc. Natl. Acad. Sci. U.S.A.">
        <title>Comparative genomics of the lactic acid bacteria.</title>
        <authorList>
            <person name="Makarova K.S."/>
            <person name="Slesarev A."/>
            <person name="Wolf Y.I."/>
            <person name="Sorokin A."/>
            <person name="Mirkin B."/>
            <person name="Koonin E.V."/>
            <person name="Pavlov A."/>
            <person name="Pavlova N."/>
            <person name="Karamychev V."/>
            <person name="Polouchine N."/>
            <person name="Shakhova V."/>
            <person name="Grigoriev I."/>
            <person name="Lou Y."/>
            <person name="Rohksar D."/>
            <person name="Lucas S."/>
            <person name="Huang K."/>
            <person name="Goodstein D.M."/>
            <person name="Hawkins T."/>
            <person name="Plengvidhya V."/>
            <person name="Welker D."/>
            <person name="Hughes J."/>
            <person name="Goh Y."/>
            <person name="Benson A."/>
            <person name="Baldwin K."/>
            <person name="Lee J.-H."/>
            <person name="Diaz-Muniz I."/>
            <person name="Dosti B."/>
            <person name="Smeianov V."/>
            <person name="Wechter W."/>
            <person name="Barabote R."/>
            <person name="Lorca G."/>
            <person name="Altermann E."/>
            <person name="Barrangou R."/>
            <person name="Ganesan B."/>
            <person name="Xie Y."/>
            <person name="Rawsthorne H."/>
            <person name="Tamir D."/>
            <person name="Parker C."/>
            <person name="Breidt F."/>
            <person name="Broadbent J.R."/>
            <person name="Hutkins R."/>
            <person name="O'Sullivan D."/>
            <person name="Steele J."/>
            <person name="Unlu G."/>
            <person name="Saier M.H. Jr."/>
            <person name="Klaenhammer T."/>
            <person name="Richardson P."/>
            <person name="Kozyavkin S."/>
            <person name="Weimer B.C."/>
            <person name="Mills D.A."/>
        </authorList>
    </citation>
    <scope>NUCLEOTIDE SEQUENCE [LARGE SCALE GENOMIC DNA]</scope>
    <source>
        <strain>ATCC 33323 / DSM 20243 / BCRC 14619 / CIP 102991 / JCM 1131 / KCTC 3163 / NCIMB 11718 / NCTC 13722 / AM63</strain>
    </source>
</reference>
<proteinExistence type="inferred from homology"/>
<evidence type="ECO:0000255" key="1">
    <source>
        <dbReference type="HAMAP-Rule" id="MF_01522"/>
    </source>
</evidence>
<sequence length="682" mass="75921">MNSNLRKKVTLAGLLVSIGIVYGDIGTSPLYVMKAIVNENGGIAHVSREYIVGSISLILWTITLLTTVKYVLIALKATNHGEGGIFSLYALVRKKAKWLVIPALVGGAALLADGTLTPAVTVTTAIEGLKNMKFGNDIPVPNQNSVIMITIVILLFLFSIQRMGTSIIGKTFGPIMLVWFTFLGLTGIMNLSHDWSLLEALNPLLAVKILFSPANKVGVLILGAVFLATTGAEALYSDVGHVGKGNIMGSWPYVFICLALNYLGQGVWILENPNYHAGATDFNPFFEALPSQWKFFAIILATLAAIIASQALITGSFTLVSEASGLKFLPRMKIIYPSTEQGQLFIPSINKMLCAATIGIVFLFRTSEHMEAAYGLAITVTMLMTTVLLFEYLSLRKVNLSLRLVFLLLFGAIETMFLISSLAKFLHGGYVTVIIAAFIGAIMYIWYFGNKIRDKREAENAYVRLDEFTTMLSNLSHDESIPLYATNLVYMAKVKYNKFIKRDMLYSILDKRPKRAHAYWFVTVNVTNEPFTAEYAVNTYGTKNVINVQLYLGFKQQQKVNVYLRQIVHDLIKDGTIESQPQEYTTTPGRDVGDFSFVIVNDVISPQTQLRSYEKFLVEARVWLQNLSSNPASWFGLDYADTVIERVPLILGNQRRQHITRIAPKKFEDIKKKLQAEGELKE</sequence>
<keyword id="KW-1003">Cell membrane</keyword>
<keyword id="KW-0406">Ion transport</keyword>
<keyword id="KW-0472">Membrane</keyword>
<keyword id="KW-0630">Potassium</keyword>
<keyword id="KW-0633">Potassium transport</keyword>
<keyword id="KW-0769">Symport</keyword>
<keyword id="KW-0812">Transmembrane</keyword>
<keyword id="KW-1133">Transmembrane helix</keyword>
<keyword id="KW-0813">Transport</keyword>